<dbReference type="EMBL" id="CP000239">
    <property type="protein sequence ID" value="ABC99454.1"/>
    <property type="molecule type" value="Genomic_DNA"/>
</dbReference>
<dbReference type="RefSeq" id="WP_011430134.1">
    <property type="nucleotide sequence ID" value="NC_007775.1"/>
</dbReference>
<dbReference type="SMR" id="Q2JUZ8"/>
<dbReference type="STRING" id="321327.CYA_1272"/>
<dbReference type="KEGG" id="cya:CYA_1272"/>
<dbReference type="eggNOG" id="COG0231">
    <property type="taxonomic scope" value="Bacteria"/>
</dbReference>
<dbReference type="HOGENOM" id="CLU_074944_0_1_3"/>
<dbReference type="OrthoDB" id="9801844at2"/>
<dbReference type="UniPathway" id="UPA00345"/>
<dbReference type="Proteomes" id="UP000008818">
    <property type="component" value="Chromosome"/>
</dbReference>
<dbReference type="GO" id="GO:0005737">
    <property type="term" value="C:cytoplasm"/>
    <property type="evidence" value="ECO:0007669"/>
    <property type="project" value="UniProtKB-SubCell"/>
</dbReference>
<dbReference type="GO" id="GO:0003746">
    <property type="term" value="F:translation elongation factor activity"/>
    <property type="evidence" value="ECO:0007669"/>
    <property type="project" value="UniProtKB-UniRule"/>
</dbReference>
<dbReference type="GO" id="GO:0043043">
    <property type="term" value="P:peptide biosynthetic process"/>
    <property type="evidence" value="ECO:0007669"/>
    <property type="project" value="InterPro"/>
</dbReference>
<dbReference type="CDD" id="cd04470">
    <property type="entry name" value="S1_EF-P_repeat_1"/>
    <property type="match status" value="1"/>
</dbReference>
<dbReference type="CDD" id="cd05794">
    <property type="entry name" value="S1_EF-P_repeat_2"/>
    <property type="match status" value="1"/>
</dbReference>
<dbReference type="FunFam" id="2.30.30.30:FF:000003">
    <property type="entry name" value="Elongation factor P"/>
    <property type="match status" value="1"/>
</dbReference>
<dbReference type="FunFam" id="2.40.50.140:FF:000004">
    <property type="entry name" value="Elongation factor P"/>
    <property type="match status" value="1"/>
</dbReference>
<dbReference type="FunFam" id="2.40.50.140:FF:000009">
    <property type="entry name" value="Elongation factor P"/>
    <property type="match status" value="1"/>
</dbReference>
<dbReference type="Gene3D" id="2.30.30.30">
    <property type="match status" value="1"/>
</dbReference>
<dbReference type="Gene3D" id="2.40.50.140">
    <property type="entry name" value="Nucleic acid-binding proteins"/>
    <property type="match status" value="2"/>
</dbReference>
<dbReference type="HAMAP" id="MF_00141">
    <property type="entry name" value="EF_P"/>
    <property type="match status" value="1"/>
</dbReference>
<dbReference type="InterPro" id="IPR015365">
    <property type="entry name" value="Elong-fact-P_C"/>
</dbReference>
<dbReference type="InterPro" id="IPR012340">
    <property type="entry name" value="NA-bd_OB-fold"/>
</dbReference>
<dbReference type="InterPro" id="IPR014722">
    <property type="entry name" value="Rib_uL2_dom2"/>
</dbReference>
<dbReference type="InterPro" id="IPR020599">
    <property type="entry name" value="Transl_elong_fac_P/YeiP"/>
</dbReference>
<dbReference type="InterPro" id="IPR013185">
    <property type="entry name" value="Transl_elong_KOW-like"/>
</dbReference>
<dbReference type="InterPro" id="IPR001059">
    <property type="entry name" value="Transl_elong_P/YeiP_cen"/>
</dbReference>
<dbReference type="InterPro" id="IPR013852">
    <property type="entry name" value="Transl_elong_P/YeiP_CS"/>
</dbReference>
<dbReference type="InterPro" id="IPR011768">
    <property type="entry name" value="Transl_elongation_fac_P"/>
</dbReference>
<dbReference type="InterPro" id="IPR008991">
    <property type="entry name" value="Translation_prot_SH3-like_sf"/>
</dbReference>
<dbReference type="NCBIfam" id="TIGR00038">
    <property type="entry name" value="efp"/>
    <property type="match status" value="1"/>
</dbReference>
<dbReference type="NCBIfam" id="NF001810">
    <property type="entry name" value="PRK00529.1"/>
    <property type="match status" value="1"/>
</dbReference>
<dbReference type="PANTHER" id="PTHR30053">
    <property type="entry name" value="ELONGATION FACTOR P"/>
    <property type="match status" value="1"/>
</dbReference>
<dbReference type="PANTHER" id="PTHR30053:SF12">
    <property type="entry name" value="ELONGATION FACTOR P (EF-P) FAMILY PROTEIN"/>
    <property type="match status" value="1"/>
</dbReference>
<dbReference type="Pfam" id="PF01132">
    <property type="entry name" value="EFP"/>
    <property type="match status" value="1"/>
</dbReference>
<dbReference type="Pfam" id="PF08207">
    <property type="entry name" value="EFP_N"/>
    <property type="match status" value="1"/>
</dbReference>
<dbReference type="Pfam" id="PF09285">
    <property type="entry name" value="Elong-fact-P_C"/>
    <property type="match status" value="1"/>
</dbReference>
<dbReference type="PIRSF" id="PIRSF005901">
    <property type="entry name" value="EF-P"/>
    <property type="match status" value="1"/>
</dbReference>
<dbReference type="SMART" id="SM01185">
    <property type="entry name" value="EFP"/>
    <property type="match status" value="1"/>
</dbReference>
<dbReference type="SMART" id="SM00841">
    <property type="entry name" value="Elong-fact-P_C"/>
    <property type="match status" value="1"/>
</dbReference>
<dbReference type="SUPFAM" id="SSF50249">
    <property type="entry name" value="Nucleic acid-binding proteins"/>
    <property type="match status" value="2"/>
</dbReference>
<dbReference type="SUPFAM" id="SSF50104">
    <property type="entry name" value="Translation proteins SH3-like domain"/>
    <property type="match status" value="1"/>
</dbReference>
<dbReference type="PROSITE" id="PS01275">
    <property type="entry name" value="EFP"/>
    <property type="match status" value="1"/>
</dbReference>
<name>EFP_SYNJA</name>
<evidence type="ECO:0000255" key="1">
    <source>
        <dbReference type="HAMAP-Rule" id="MF_00141"/>
    </source>
</evidence>
<organism>
    <name type="scientific">Synechococcus sp. (strain JA-3-3Ab)</name>
    <name type="common">Cyanobacteria bacterium Yellowstone A-Prime</name>
    <dbReference type="NCBI Taxonomy" id="321327"/>
    <lineage>
        <taxon>Bacteria</taxon>
        <taxon>Bacillati</taxon>
        <taxon>Cyanobacteriota</taxon>
        <taxon>Cyanophyceae</taxon>
        <taxon>Synechococcales</taxon>
        <taxon>Synechococcaceae</taxon>
        <taxon>Synechococcus</taxon>
    </lineage>
</organism>
<reference key="1">
    <citation type="journal article" date="2007" name="ISME J.">
        <title>Population level functional diversity in a microbial community revealed by comparative genomic and metagenomic analyses.</title>
        <authorList>
            <person name="Bhaya D."/>
            <person name="Grossman A.R."/>
            <person name="Steunou A.-S."/>
            <person name="Khuri N."/>
            <person name="Cohan F.M."/>
            <person name="Hamamura N."/>
            <person name="Melendrez M.C."/>
            <person name="Bateson M.M."/>
            <person name="Ward D.M."/>
            <person name="Heidelberg J.F."/>
        </authorList>
    </citation>
    <scope>NUCLEOTIDE SEQUENCE [LARGE SCALE GENOMIC DNA]</scope>
    <source>
        <strain>JA-3-3Ab</strain>
    </source>
</reference>
<feature type="chain" id="PRO_1000010882" description="Elongation factor P">
    <location>
        <begin position="1"/>
        <end position="185"/>
    </location>
</feature>
<keyword id="KW-0963">Cytoplasm</keyword>
<keyword id="KW-0251">Elongation factor</keyword>
<keyword id="KW-0648">Protein biosynthesis</keyword>
<gene>
    <name evidence="1" type="primary">efp</name>
    <name type="ordered locus">CYA_1272</name>
</gene>
<proteinExistence type="inferred from homology"/>
<comment type="function">
    <text evidence="1">Involved in peptide bond synthesis. Stimulates efficient translation and peptide-bond synthesis on native or reconstituted 70S ribosomes in vitro. Probably functions indirectly by altering the affinity of the ribosome for aminoacyl-tRNA, thus increasing their reactivity as acceptors for peptidyl transferase.</text>
</comment>
<comment type="pathway">
    <text evidence="1">Protein biosynthesis; polypeptide chain elongation.</text>
</comment>
<comment type="subcellular location">
    <subcellularLocation>
        <location evidence="1">Cytoplasm</location>
    </subcellularLocation>
</comment>
<comment type="similarity">
    <text evidence="1">Belongs to the elongation factor P family.</text>
</comment>
<sequence>MISSNDLRPGVSVEIDGAPYKVIEFLHVKPGKGAAFVRTKLKNMQTGNVVEKTFRAGEMLPAATIEKVNMQYLYSEGDNFVFMDMETYEQAPLSAAQIGSAVKYLKENMEVAILRWKGQVIDVELPNTVVLEVVETDPGVRGDTATGGTKPAKLETGAEIQVPLFIKVGERVRVDTRTDTYIGRE</sequence>
<protein>
    <recommendedName>
        <fullName evidence="1">Elongation factor P</fullName>
        <shortName evidence="1">EF-P</shortName>
    </recommendedName>
</protein>
<accession>Q2JUZ8</accession>